<comment type="function">
    <text evidence="1">F(1)F(0) ATP synthase produces ATP from ADP in the presence of a proton or sodium gradient. F-type ATPases consist of two structural domains, F(1) containing the extramembraneous catalytic core and F(0) containing the membrane proton channel, linked together by a central stalk and a peripheral stalk. During catalysis, ATP synthesis in the catalytic domain of F(1) is coupled via a rotary mechanism of the central stalk subunits to proton translocation.</text>
</comment>
<comment type="function">
    <text evidence="1">Key component of the F(0) channel; it plays a direct role in translocation across the membrane. A homomeric c-ring of between 10-14 subunits forms the central stalk rotor element with the F(1) delta and epsilon subunits.</text>
</comment>
<comment type="subunit">
    <text evidence="1">F-type ATPases have 2 components, F(1) - the catalytic core - and F(0) - the membrane proton channel. F(1) has five subunits: alpha(3), beta(3), gamma(1), delta(1), epsilon(1). F(0) has three main subunits: a(1), b(2) and c(10-14). The alpha and beta chains form an alternating ring which encloses part of the gamma chain. F(1) is attached to F(0) by a central stalk formed by the gamma and epsilon chains, while a peripheral stalk is formed by the delta and b chains.</text>
</comment>
<comment type="subcellular location">
    <subcellularLocation>
        <location evidence="1">Cell inner membrane</location>
        <topology evidence="1">Multi-pass membrane protein</topology>
    </subcellularLocation>
</comment>
<comment type="similarity">
    <text evidence="1">Belongs to the ATPase C chain family.</text>
</comment>
<name>ATPL_YERPY</name>
<evidence type="ECO:0000255" key="1">
    <source>
        <dbReference type="HAMAP-Rule" id="MF_01396"/>
    </source>
</evidence>
<keyword id="KW-0066">ATP synthesis</keyword>
<keyword id="KW-0997">Cell inner membrane</keyword>
<keyword id="KW-1003">Cell membrane</keyword>
<keyword id="KW-0138">CF(0)</keyword>
<keyword id="KW-0375">Hydrogen ion transport</keyword>
<keyword id="KW-0406">Ion transport</keyword>
<keyword id="KW-0446">Lipid-binding</keyword>
<keyword id="KW-0472">Membrane</keyword>
<keyword id="KW-0812">Transmembrane</keyword>
<keyword id="KW-1133">Transmembrane helix</keyword>
<keyword id="KW-0813">Transport</keyword>
<sequence>MENLNMDLLYMAAAVMMGLAAIGAAIGIGILGGKFLEGAARQPDLIPLLRTQFFIVMGLVDAIPMIAVGLGLYVMFAVA</sequence>
<dbReference type="EMBL" id="CP000950">
    <property type="protein sequence ID" value="ACA70477.1"/>
    <property type="molecule type" value="Genomic_DNA"/>
</dbReference>
<dbReference type="RefSeq" id="WP_000429386.1">
    <property type="nucleotide sequence ID" value="NZ_CP009792.1"/>
</dbReference>
<dbReference type="SMR" id="B1JR36"/>
<dbReference type="GeneID" id="98390858"/>
<dbReference type="KEGG" id="ypy:YPK_4221"/>
<dbReference type="PATRIC" id="fig|502800.11.peg.571"/>
<dbReference type="GO" id="GO:0005886">
    <property type="term" value="C:plasma membrane"/>
    <property type="evidence" value="ECO:0007669"/>
    <property type="project" value="UniProtKB-SubCell"/>
</dbReference>
<dbReference type="GO" id="GO:0045259">
    <property type="term" value="C:proton-transporting ATP synthase complex"/>
    <property type="evidence" value="ECO:0007669"/>
    <property type="project" value="UniProtKB-KW"/>
</dbReference>
<dbReference type="GO" id="GO:0033177">
    <property type="term" value="C:proton-transporting two-sector ATPase complex, proton-transporting domain"/>
    <property type="evidence" value="ECO:0007669"/>
    <property type="project" value="InterPro"/>
</dbReference>
<dbReference type="GO" id="GO:0008289">
    <property type="term" value="F:lipid binding"/>
    <property type="evidence" value="ECO:0007669"/>
    <property type="project" value="UniProtKB-KW"/>
</dbReference>
<dbReference type="GO" id="GO:0046933">
    <property type="term" value="F:proton-transporting ATP synthase activity, rotational mechanism"/>
    <property type="evidence" value="ECO:0007669"/>
    <property type="project" value="UniProtKB-UniRule"/>
</dbReference>
<dbReference type="CDD" id="cd18185">
    <property type="entry name" value="ATP-synt_Fo_c_ATPE"/>
    <property type="match status" value="1"/>
</dbReference>
<dbReference type="FunFam" id="1.20.20.10:FF:000002">
    <property type="entry name" value="ATP synthase subunit c"/>
    <property type="match status" value="1"/>
</dbReference>
<dbReference type="Gene3D" id="1.20.20.10">
    <property type="entry name" value="F1F0 ATP synthase subunit C"/>
    <property type="match status" value="1"/>
</dbReference>
<dbReference type="HAMAP" id="MF_01396">
    <property type="entry name" value="ATP_synth_c_bact"/>
    <property type="match status" value="1"/>
</dbReference>
<dbReference type="InterPro" id="IPR005953">
    <property type="entry name" value="ATP_synth_csu_bac/chlpt"/>
</dbReference>
<dbReference type="InterPro" id="IPR000454">
    <property type="entry name" value="ATP_synth_F0_csu"/>
</dbReference>
<dbReference type="InterPro" id="IPR020537">
    <property type="entry name" value="ATP_synth_F0_csu_DDCD_BS"/>
</dbReference>
<dbReference type="InterPro" id="IPR038662">
    <property type="entry name" value="ATP_synth_F0_csu_sf"/>
</dbReference>
<dbReference type="InterPro" id="IPR002379">
    <property type="entry name" value="ATPase_proteolipid_c-like_dom"/>
</dbReference>
<dbReference type="InterPro" id="IPR035921">
    <property type="entry name" value="F/V-ATP_Csub_sf"/>
</dbReference>
<dbReference type="NCBIfam" id="TIGR01260">
    <property type="entry name" value="ATP_synt_c"/>
    <property type="match status" value="1"/>
</dbReference>
<dbReference type="NCBIfam" id="NF005363">
    <property type="entry name" value="PRK06876.1"/>
    <property type="match status" value="1"/>
</dbReference>
<dbReference type="Pfam" id="PF00137">
    <property type="entry name" value="ATP-synt_C"/>
    <property type="match status" value="1"/>
</dbReference>
<dbReference type="PRINTS" id="PR00124">
    <property type="entry name" value="ATPASEC"/>
</dbReference>
<dbReference type="SUPFAM" id="SSF81333">
    <property type="entry name" value="F1F0 ATP synthase subunit C"/>
    <property type="match status" value="1"/>
</dbReference>
<dbReference type="PROSITE" id="PS00605">
    <property type="entry name" value="ATPASE_C"/>
    <property type="match status" value="1"/>
</dbReference>
<proteinExistence type="inferred from homology"/>
<organism>
    <name type="scientific">Yersinia pseudotuberculosis serotype O:3 (strain YPIII)</name>
    <dbReference type="NCBI Taxonomy" id="502800"/>
    <lineage>
        <taxon>Bacteria</taxon>
        <taxon>Pseudomonadati</taxon>
        <taxon>Pseudomonadota</taxon>
        <taxon>Gammaproteobacteria</taxon>
        <taxon>Enterobacterales</taxon>
        <taxon>Yersiniaceae</taxon>
        <taxon>Yersinia</taxon>
    </lineage>
</organism>
<gene>
    <name evidence="1" type="primary">atpE</name>
    <name type="ordered locus">YPK_4221</name>
</gene>
<feature type="chain" id="PRO_1000184546" description="ATP synthase subunit c">
    <location>
        <begin position="1"/>
        <end position="79"/>
    </location>
</feature>
<feature type="transmembrane region" description="Helical" evidence="1">
    <location>
        <begin position="11"/>
        <end position="31"/>
    </location>
</feature>
<feature type="transmembrane region" description="Helical" evidence="1">
    <location>
        <begin position="53"/>
        <end position="73"/>
    </location>
</feature>
<feature type="site" description="Reversibly protonated during proton transport" evidence="1">
    <location>
        <position position="61"/>
    </location>
</feature>
<accession>B1JR36</accession>
<protein>
    <recommendedName>
        <fullName evidence="1">ATP synthase subunit c</fullName>
    </recommendedName>
    <alternativeName>
        <fullName evidence="1">ATP synthase F(0) sector subunit c</fullName>
    </alternativeName>
    <alternativeName>
        <fullName evidence="1">F-type ATPase subunit c</fullName>
        <shortName evidence="1">F-ATPase subunit c</shortName>
    </alternativeName>
    <alternativeName>
        <fullName evidence="1">Lipid-binding protein</fullName>
    </alternativeName>
</protein>
<reference key="1">
    <citation type="submission" date="2008-02" db="EMBL/GenBank/DDBJ databases">
        <title>Complete sequence of Yersinia pseudotuberculosis YPIII.</title>
        <authorList>
            <consortium name="US DOE Joint Genome Institute"/>
            <person name="Copeland A."/>
            <person name="Lucas S."/>
            <person name="Lapidus A."/>
            <person name="Glavina del Rio T."/>
            <person name="Dalin E."/>
            <person name="Tice H."/>
            <person name="Bruce D."/>
            <person name="Goodwin L."/>
            <person name="Pitluck S."/>
            <person name="Munk A.C."/>
            <person name="Brettin T."/>
            <person name="Detter J.C."/>
            <person name="Han C."/>
            <person name="Tapia R."/>
            <person name="Schmutz J."/>
            <person name="Larimer F."/>
            <person name="Land M."/>
            <person name="Hauser L."/>
            <person name="Challacombe J.F."/>
            <person name="Green L."/>
            <person name="Lindler L.E."/>
            <person name="Nikolich M.P."/>
            <person name="Richardson P."/>
        </authorList>
    </citation>
    <scope>NUCLEOTIDE SEQUENCE [LARGE SCALE GENOMIC DNA]</scope>
    <source>
        <strain>YPIII</strain>
    </source>
</reference>